<proteinExistence type="inferred from homology"/>
<evidence type="ECO:0000255" key="1">
    <source>
        <dbReference type="HAMAP-Rule" id="MF_01590"/>
    </source>
</evidence>
<name>CMOB_ACTSZ</name>
<accession>A6VMT0</accession>
<feature type="chain" id="PRO_1000073617" description="tRNA U34 carboxymethyltransferase">
    <location>
        <begin position="1"/>
        <end position="321"/>
    </location>
</feature>
<feature type="binding site" evidence="1">
    <location>
        <position position="90"/>
    </location>
    <ligand>
        <name>carboxy-S-adenosyl-L-methionine</name>
        <dbReference type="ChEBI" id="CHEBI:134278"/>
    </ligand>
</feature>
<feature type="binding site" evidence="1">
    <location>
        <position position="104"/>
    </location>
    <ligand>
        <name>carboxy-S-adenosyl-L-methionine</name>
        <dbReference type="ChEBI" id="CHEBI:134278"/>
    </ligand>
</feature>
<feature type="binding site" evidence="1">
    <location>
        <position position="109"/>
    </location>
    <ligand>
        <name>carboxy-S-adenosyl-L-methionine</name>
        <dbReference type="ChEBI" id="CHEBI:134278"/>
    </ligand>
</feature>
<feature type="binding site" evidence="1">
    <location>
        <position position="129"/>
    </location>
    <ligand>
        <name>carboxy-S-adenosyl-L-methionine</name>
        <dbReference type="ChEBI" id="CHEBI:134278"/>
    </ligand>
</feature>
<feature type="binding site" evidence="1">
    <location>
        <begin position="151"/>
        <end position="153"/>
    </location>
    <ligand>
        <name>carboxy-S-adenosyl-L-methionine</name>
        <dbReference type="ChEBI" id="CHEBI:134278"/>
    </ligand>
</feature>
<feature type="binding site" evidence="1">
    <location>
        <begin position="180"/>
        <end position="181"/>
    </location>
    <ligand>
        <name>carboxy-S-adenosyl-L-methionine</name>
        <dbReference type="ChEBI" id="CHEBI:134278"/>
    </ligand>
</feature>
<feature type="binding site" evidence="1">
    <location>
        <position position="195"/>
    </location>
    <ligand>
        <name>carboxy-S-adenosyl-L-methionine</name>
        <dbReference type="ChEBI" id="CHEBI:134278"/>
    </ligand>
</feature>
<feature type="binding site" evidence="1">
    <location>
        <position position="199"/>
    </location>
    <ligand>
        <name>carboxy-S-adenosyl-L-methionine</name>
        <dbReference type="ChEBI" id="CHEBI:134278"/>
    </ligand>
</feature>
<feature type="binding site" evidence="1">
    <location>
        <position position="314"/>
    </location>
    <ligand>
        <name>carboxy-S-adenosyl-L-methionine</name>
        <dbReference type="ChEBI" id="CHEBI:134278"/>
    </ligand>
</feature>
<dbReference type="EC" id="2.5.1.-" evidence="1"/>
<dbReference type="EMBL" id="CP000746">
    <property type="protein sequence ID" value="ABR74277.1"/>
    <property type="molecule type" value="Genomic_DNA"/>
</dbReference>
<dbReference type="RefSeq" id="WP_012072655.1">
    <property type="nucleotide sequence ID" value="NC_009655.1"/>
</dbReference>
<dbReference type="SMR" id="A6VMT0"/>
<dbReference type="STRING" id="339671.Asuc_0909"/>
<dbReference type="KEGG" id="asu:Asuc_0909"/>
<dbReference type="eggNOG" id="COG0500">
    <property type="taxonomic scope" value="Bacteria"/>
</dbReference>
<dbReference type="HOGENOM" id="CLU_052665_0_0_6"/>
<dbReference type="OrthoDB" id="9773188at2"/>
<dbReference type="Proteomes" id="UP000001114">
    <property type="component" value="Chromosome"/>
</dbReference>
<dbReference type="GO" id="GO:0008168">
    <property type="term" value="F:methyltransferase activity"/>
    <property type="evidence" value="ECO:0007669"/>
    <property type="project" value="TreeGrafter"/>
</dbReference>
<dbReference type="GO" id="GO:0016765">
    <property type="term" value="F:transferase activity, transferring alkyl or aryl (other than methyl) groups"/>
    <property type="evidence" value="ECO:0007669"/>
    <property type="project" value="UniProtKB-UniRule"/>
</dbReference>
<dbReference type="GO" id="GO:0002098">
    <property type="term" value="P:tRNA wobble uridine modification"/>
    <property type="evidence" value="ECO:0007669"/>
    <property type="project" value="InterPro"/>
</dbReference>
<dbReference type="CDD" id="cd02440">
    <property type="entry name" value="AdoMet_MTases"/>
    <property type="match status" value="1"/>
</dbReference>
<dbReference type="Gene3D" id="3.40.50.150">
    <property type="entry name" value="Vaccinia Virus protein VP39"/>
    <property type="match status" value="1"/>
</dbReference>
<dbReference type="HAMAP" id="MF_01590">
    <property type="entry name" value="tRNA_carboxymethyltr_CmoB"/>
    <property type="match status" value="1"/>
</dbReference>
<dbReference type="InterPro" id="IPR010017">
    <property type="entry name" value="CmoB"/>
</dbReference>
<dbReference type="InterPro" id="IPR027555">
    <property type="entry name" value="Mo5U34_MeTrfas-like"/>
</dbReference>
<dbReference type="InterPro" id="IPR029063">
    <property type="entry name" value="SAM-dependent_MTases_sf"/>
</dbReference>
<dbReference type="NCBIfam" id="NF011650">
    <property type="entry name" value="PRK15068.1"/>
    <property type="match status" value="1"/>
</dbReference>
<dbReference type="NCBIfam" id="TIGR00452">
    <property type="entry name" value="tRNA 5-methoxyuridine(34)/uridine 5-oxyacetic acid(34) synthase CmoB"/>
    <property type="match status" value="1"/>
</dbReference>
<dbReference type="PANTHER" id="PTHR43464">
    <property type="entry name" value="METHYLTRANSFERASE"/>
    <property type="match status" value="1"/>
</dbReference>
<dbReference type="PANTHER" id="PTHR43464:SF95">
    <property type="entry name" value="TRNA U34 CARBOXYMETHYLTRANSFERASE"/>
    <property type="match status" value="1"/>
</dbReference>
<dbReference type="Pfam" id="PF08003">
    <property type="entry name" value="Methyltransf_9"/>
    <property type="match status" value="1"/>
</dbReference>
<dbReference type="SUPFAM" id="SSF53335">
    <property type="entry name" value="S-adenosyl-L-methionine-dependent methyltransferases"/>
    <property type="match status" value="1"/>
</dbReference>
<comment type="function">
    <text evidence="1">Catalyzes carboxymethyl transfer from carboxy-S-adenosyl-L-methionine (Cx-SAM) to 5-hydroxyuridine (ho5U) to form 5-carboxymethoxyuridine (cmo5U) at position 34 in tRNAs.</text>
</comment>
<comment type="catalytic activity">
    <reaction evidence="1">
        <text>carboxy-S-adenosyl-L-methionine + 5-hydroxyuridine(34) in tRNA = 5-carboxymethoxyuridine(34) in tRNA + S-adenosyl-L-homocysteine + H(+)</text>
        <dbReference type="Rhea" id="RHEA:52848"/>
        <dbReference type="Rhea" id="RHEA-COMP:13381"/>
        <dbReference type="Rhea" id="RHEA-COMP:13383"/>
        <dbReference type="ChEBI" id="CHEBI:15378"/>
        <dbReference type="ChEBI" id="CHEBI:57856"/>
        <dbReference type="ChEBI" id="CHEBI:134278"/>
        <dbReference type="ChEBI" id="CHEBI:136877"/>
        <dbReference type="ChEBI" id="CHEBI:136879"/>
    </reaction>
</comment>
<comment type="subunit">
    <text evidence="1">Homotetramer.</text>
</comment>
<comment type="similarity">
    <text evidence="1">Belongs to the class I-like SAM-binding methyltransferase superfamily. CmoB family.</text>
</comment>
<organism>
    <name type="scientific">Actinobacillus succinogenes (strain ATCC 55618 / DSM 22257 / CCUG 43843 / 130Z)</name>
    <dbReference type="NCBI Taxonomy" id="339671"/>
    <lineage>
        <taxon>Bacteria</taxon>
        <taxon>Pseudomonadati</taxon>
        <taxon>Pseudomonadota</taxon>
        <taxon>Gammaproteobacteria</taxon>
        <taxon>Pasteurellales</taxon>
        <taxon>Pasteurellaceae</taxon>
        <taxon>Actinobacillus</taxon>
    </lineage>
</organism>
<reference key="1">
    <citation type="journal article" date="2010" name="BMC Genomics">
        <title>A genomic perspective on the potential of Actinobacillus succinogenes for industrial succinate production.</title>
        <authorList>
            <person name="McKinlay J.B."/>
            <person name="Laivenieks M."/>
            <person name="Schindler B.D."/>
            <person name="McKinlay A.A."/>
            <person name="Siddaramappa S."/>
            <person name="Challacombe J.F."/>
            <person name="Lowry S.R."/>
            <person name="Clum A."/>
            <person name="Lapidus A.L."/>
            <person name="Burkhart K.B."/>
            <person name="Harkins V."/>
            <person name="Vieille C."/>
        </authorList>
    </citation>
    <scope>NUCLEOTIDE SEQUENCE [LARGE SCALE GENOMIC DNA]</scope>
    <source>
        <strain>ATCC 55618 / DSM 22257 / CCUG 43843 / 130Z</strain>
    </source>
</reference>
<gene>
    <name evidence="1" type="primary">cmoB</name>
    <name type="ordered locus">Asuc_0909</name>
</gene>
<protein>
    <recommendedName>
        <fullName evidence="1">tRNA U34 carboxymethyltransferase</fullName>
        <ecNumber evidence="1">2.5.1.-</ecNumber>
    </recommendedName>
</protein>
<sequence>MIDFRPFYRQIATSNLSAWLETLPLQLKNWEKNTHGEYAKWAKIVDFLPELTADHLDLKNAVKSDRTLPLSEGERQRIIHHLQQLMPWRKGPYHLYGIHVDCEWRSDFKWQRVLPHLAPLQDRTVLDVGCGSGYHMWRMVGEGAKTVVGIDPTELFLCQFEAVRKLLNNDRRANLIPLGIEEMQPLGVFDTVFSMGVLYHRKSPLDHLTQLKNQLRKGGELVLETLVIDGDENTVLVPADRYAKMKNVYFIPSVACLINWLGKSGFTNIRCVDEAVTTLEEQRKTDWLNNESLIDFLDPQDHSKTIEGYPAPKRAVIIANK</sequence>
<keyword id="KW-1185">Reference proteome</keyword>
<keyword id="KW-0808">Transferase</keyword>
<keyword id="KW-0819">tRNA processing</keyword>